<reference key="1">
    <citation type="journal article" date="2000" name="Proc. Natl. Acad. Sci. U.S.A.">
        <title>Genomic organization of alpha 1 and beta 1 subunits of the mammalian soluble guanylyl cyclase genes.</title>
        <authorList>
            <person name="Sharina I.G."/>
            <person name="Krumenacker J.S."/>
            <person name="Martin E."/>
            <person name="Murad F."/>
        </authorList>
    </citation>
    <scope>NUCLEOTIDE SEQUENCE [MRNA]</scope>
    <source>
        <strain>BALB/cJ</strain>
    </source>
</reference>
<reference key="2">
    <citation type="journal article" date="2005" name="Science">
        <title>The transcriptional landscape of the mammalian genome.</title>
        <authorList>
            <person name="Carninci P."/>
            <person name="Kasukawa T."/>
            <person name="Katayama S."/>
            <person name="Gough J."/>
            <person name="Frith M.C."/>
            <person name="Maeda N."/>
            <person name="Oyama R."/>
            <person name="Ravasi T."/>
            <person name="Lenhard B."/>
            <person name="Wells C."/>
            <person name="Kodzius R."/>
            <person name="Shimokawa K."/>
            <person name="Bajic V.B."/>
            <person name="Brenner S.E."/>
            <person name="Batalov S."/>
            <person name="Forrest A.R."/>
            <person name="Zavolan M."/>
            <person name="Davis M.J."/>
            <person name="Wilming L.G."/>
            <person name="Aidinis V."/>
            <person name="Allen J.E."/>
            <person name="Ambesi-Impiombato A."/>
            <person name="Apweiler R."/>
            <person name="Aturaliya R.N."/>
            <person name="Bailey T.L."/>
            <person name="Bansal M."/>
            <person name="Baxter L."/>
            <person name="Beisel K.W."/>
            <person name="Bersano T."/>
            <person name="Bono H."/>
            <person name="Chalk A.M."/>
            <person name="Chiu K.P."/>
            <person name="Choudhary V."/>
            <person name="Christoffels A."/>
            <person name="Clutterbuck D.R."/>
            <person name="Crowe M.L."/>
            <person name="Dalla E."/>
            <person name="Dalrymple B.P."/>
            <person name="de Bono B."/>
            <person name="Della Gatta G."/>
            <person name="di Bernardo D."/>
            <person name="Down T."/>
            <person name="Engstrom P."/>
            <person name="Fagiolini M."/>
            <person name="Faulkner G."/>
            <person name="Fletcher C.F."/>
            <person name="Fukushima T."/>
            <person name="Furuno M."/>
            <person name="Futaki S."/>
            <person name="Gariboldi M."/>
            <person name="Georgii-Hemming P."/>
            <person name="Gingeras T.R."/>
            <person name="Gojobori T."/>
            <person name="Green R.E."/>
            <person name="Gustincich S."/>
            <person name="Harbers M."/>
            <person name="Hayashi Y."/>
            <person name="Hensch T.K."/>
            <person name="Hirokawa N."/>
            <person name="Hill D."/>
            <person name="Huminiecki L."/>
            <person name="Iacono M."/>
            <person name="Ikeo K."/>
            <person name="Iwama A."/>
            <person name="Ishikawa T."/>
            <person name="Jakt M."/>
            <person name="Kanapin A."/>
            <person name="Katoh M."/>
            <person name="Kawasawa Y."/>
            <person name="Kelso J."/>
            <person name="Kitamura H."/>
            <person name="Kitano H."/>
            <person name="Kollias G."/>
            <person name="Krishnan S.P."/>
            <person name="Kruger A."/>
            <person name="Kummerfeld S.K."/>
            <person name="Kurochkin I.V."/>
            <person name="Lareau L.F."/>
            <person name="Lazarevic D."/>
            <person name="Lipovich L."/>
            <person name="Liu J."/>
            <person name="Liuni S."/>
            <person name="McWilliam S."/>
            <person name="Madan Babu M."/>
            <person name="Madera M."/>
            <person name="Marchionni L."/>
            <person name="Matsuda H."/>
            <person name="Matsuzawa S."/>
            <person name="Miki H."/>
            <person name="Mignone F."/>
            <person name="Miyake S."/>
            <person name="Morris K."/>
            <person name="Mottagui-Tabar S."/>
            <person name="Mulder N."/>
            <person name="Nakano N."/>
            <person name="Nakauchi H."/>
            <person name="Ng P."/>
            <person name="Nilsson R."/>
            <person name="Nishiguchi S."/>
            <person name="Nishikawa S."/>
            <person name="Nori F."/>
            <person name="Ohara O."/>
            <person name="Okazaki Y."/>
            <person name="Orlando V."/>
            <person name="Pang K.C."/>
            <person name="Pavan W.J."/>
            <person name="Pavesi G."/>
            <person name="Pesole G."/>
            <person name="Petrovsky N."/>
            <person name="Piazza S."/>
            <person name="Reed J."/>
            <person name="Reid J.F."/>
            <person name="Ring B.Z."/>
            <person name="Ringwald M."/>
            <person name="Rost B."/>
            <person name="Ruan Y."/>
            <person name="Salzberg S.L."/>
            <person name="Sandelin A."/>
            <person name="Schneider C."/>
            <person name="Schoenbach C."/>
            <person name="Sekiguchi K."/>
            <person name="Semple C.A."/>
            <person name="Seno S."/>
            <person name="Sessa L."/>
            <person name="Sheng Y."/>
            <person name="Shibata Y."/>
            <person name="Shimada H."/>
            <person name="Shimada K."/>
            <person name="Silva D."/>
            <person name="Sinclair B."/>
            <person name="Sperling S."/>
            <person name="Stupka E."/>
            <person name="Sugiura K."/>
            <person name="Sultana R."/>
            <person name="Takenaka Y."/>
            <person name="Taki K."/>
            <person name="Tammoja K."/>
            <person name="Tan S.L."/>
            <person name="Tang S."/>
            <person name="Taylor M.S."/>
            <person name="Tegner J."/>
            <person name="Teichmann S.A."/>
            <person name="Ueda H.R."/>
            <person name="van Nimwegen E."/>
            <person name="Verardo R."/>
            <person name="Wei C.L."/>
            <person name="Yagi K."/>
            <person name="Yamanishi H."/>
            <person name="Zabarovsky E."/>
            <person name="Zhu S."/>
            <person name="Zimmer A."/>
            <person name="Hide W."/>
            <person name="Bult C."/>
            <person name="Grimmond S.M."/>
            <person name="Teasdale R.D."/>
            <person name="Liu E.T."/>
            <person name="Brusic V."/>
            <person name="Quackenbush J."/>
            <person name="Wahlestedt C."/>
            <person name="Mattick J.S."/>
            <person name="Hume D.A."/>
            <person name="Kai C."/>
            <person name="Sasaki D."/>
            <person name="Tomaru Y."/>
            <person name="Fukuda S."/>
            <person name="Kanamori-Katayama M."/>
            <person name="Suzuki M."/>
            <person name="Aoki J."/>
            <person name="Arakawa T."/>
            <person name="Iida J."/>
            <person name="Imamura K."/>
            <person name="Itoh M."/>
            <person name="Kato T."/>
            <person name="Kawaji H."/>
            <person name="Kawagashira N."/>
            <person name="Kawashima T."/>
            <person name="Kojima M."/>
            <person name="Kondo S."/>
            <person name="Konno H."/>
            <person name="Nakano K."/>
            <person name="Ninomiya N."/>
            <person name="Nishio T."/>
            <person name="Okada M."/>
            <person name="Plessy C."/>
            <person name="Shibata K."/>
            <person name="Shiraki T."/>
            <person name="Suzuki S."/>
            <person name="Tagami M."/>
            <person name="Waki K."/>
            <person name="Watahiki A."/>
            <person name="Okamura-Oho Y."/>
            <person name="Suzuki H."/>
            <person name="Kawai J."/>
            <person name="Hayashizaki Y."/>
        </authorList>
    </citation>
    <scope>NUCLEOTIDE SEQUENCE [LARGE SCALE MRNA]</scope>
    <source>
        <strain>C57BL/6J</strain>
        <tissue>Lung</tissue>
    </source>
</reference>
<reference key="3">
    <citation type="journal article" date="2004" name="Genome Res.">
        <title>The status, quality, and expansion of the NIH full-length cDNA project: the Mammalian Gene Collection (MGC).</title>
        <authorList>
            <consortium name="The MGC Project Team"/>
        </authorList>
    </citation>
    <scope>NUCLEOTIDE SEQUENCE [LARGE SCALE MRNA]</scope>
</reference>
<reference key="4">
    <citation type="journal article" date="2010" name="Cell">
        <title>A tissue-specific atlas of mouse protein phosphorylation and expression.</title>
        <authorList>
            <person name="Huttlin E.L."/>
            <person name="Jedrychowski M.P."/>
            <person name="Elias J.E."/>
            <person name="Goswami T."/>
            <person name="Rad R."/>
            <person name="Beausoleil S.A."/>
            <person name="Villen J."/>
            <person name="Haas W."/>
            <person name="Sowa M.E."/>
            <person name="Gygi S.P."/>
        </authorList>
    </citation>
    <scope>PHOSPHORYLATION [LARGE SCALE ANALYSIS] AT SER-267</scope>
    <scope>IDENTIFICATION BY MASS SPECTROMETRY [LARGE SCALE ANALYSIS]</scope>
    <source>
        <tissue>Brain</tissue>
        <tissue>Kidney</tissue>
        <tissue>Lung</tissue>
        <tissue>Spleen</tissue>
    </source>
</reference>
<sequence length="691" mass="77588">MFCRKFKDLKITGECPFSLLAPGQVPKEPTEEVAGGSEGCQATLPICQYFPEKNAEGSLPQRKTSRNRVYLHTLAESICKLIFPECERLNLALQRTLAKHKIEENRKSSEKEDLEKIIAEEAIAAGAPVEALKDSLGEELFKICYEEDEHILGVVGGTLKDFLNSFSTLLKQSSHCQEAERRGRLEDASILCLDKDQDFLNVYYFFPKRTTALLLPGIIKAAARILYESHVEVSLMPPCFRSDCTEFVNQPYLLYSVHVKSTKPSLSPGKPQSSLVIPASLFCKTFPFHFMLDRDLAILQLGNGIRRLVNKRDFQGKPNFEEFFEILTPKINQTFSGIMTMLNMQFVIRVRRWDNSVKKSSRVMDLKGQMIYIVESSAILFLGSPCVDRLEDFTGRGLYLSDIPIHNALRDVVLIGEQARAQDGLKKRLGKLKATLEHAHQALEEEKKRTVDLLCSIFPSEVAQQLWQGQIVQAKKFSEVTMLFSDIVGFTAICSQCSPLQVITMLNALYTRFDQQCGELDVYKVETIGDAYCVAGGLHRESDTHAVQIALMALKMMELSNEVMSPHGEPIKMRIGLHSGSVFAGVVGVKMPRYCLFGNNVTLANKFESCSVPRKINVSPTTYRLLKDCPGFVFTPRSREELPPNFPSDIPGICHFLDAYHHQGPNSKPWFQDKDVEDGNANFLGKASGID</sequence>
<organism>
    <name type="scientific">Mus musculus</name>
    <name type="common">Mouse</name>
    <dbReference type="NCBI Taxonomy" id="10090"/>
    <lineage>
        <taxon>Eukaryota</taxon>
        <taxon>Metazoa</taxon>
        <taxon>Chordata</taxon>
        <taxon>Craniata</taxon>
        <taxon>Vertebrata</taxon>
        <taxon>Euteleostomi</taxon>
        <taxon>Mammalia</taxon>
        <taxon>Eutheria</taxon>
        <taxon>Euarchontoglires</taxon>
        <taxon>Glires</taxon>
        <taxon>Rodentia</taxon>
        <taxon>Myomorpha</taxon>
        <taxon>Muroidea</taxon>
        <taxon>Muridae</taxon>
        <taxon>Murinae</taxon>
        <taxon>Mus</taxon>
        <taxon>Mus</taxon>
    </lineage>
</organism>
<comment type="catalytic activity">
    <reaction evidence="1">
        <text>GTP = 3',5'-cyclic GMP + diphosphate</text>
        <dbReference type="Rhea" id="RHEA:13665"/>
        <dbReference type="ChEBI" id="CHEBI:33019"/>
        <dbReference type="ChEBI" id="CHEBI:37565"/>
        <dbReference type="ChEBI" id="CHEBI:57746"/>
        <dbReference type="EC" id="4.6.1.2"/>
    </reaction>
</comment>
<comment type="cofactor">
    <cofactor evidence="1">
        <name>Mg(2+)</name>
        <dbReference type="ChEBI" id="CHEBI:18420"/>
    </cofactor>
    <cofactor evidence="1">
        <name>Mn(2+)</name>
        <dbReference type="ChEBI" id="CHEBI:29035"/>
    </cofactor>
    <text evidence="1">Also has activity with Mn(2+) (in vitro).</text>
</comment>
<comment type="activity regulation">
    <text evidence="1">Activated by nitric oxide in the presence of magnesium or manganese ions.</text>
</comment>
<comment type="subunit">
    <text evidence="1">The active enzyme is formed by a heterodimer of an alpha and a beta subunit. Heterodimer with GUCY1B1.</text>
</comment>
<comment type="subcellular location">
    <subcellularLocation>
        <location evidence="3">Cytoplasm</location>
    </subcellularLocation>
</comment>
<comment type="miscellaneous">
    <text>There are two types of guanylate cyclases: soluble forms and membrane-associated receptor forms.</text>
</comment>
<comment type="similarity">
    <text evidence="2">Belongs to the adenylyl cyclase class-4/guanylyl cyclase family.</text>
</comment>
<feature type="chain" id="PRO_0000074111" description="Guanylate cyclase soluble subunit alpha-1">
    <location>
        <begin position="1"/>
        <end position="691"/>
    </location>
</feature>
<feature type="domain" description="Guanylate cyclase" evidence="2">
    <location>
        <begin position="480"/>
        <end position="607"/>
    </location>
</feature>
<feature type="modified residue" description="Phosphoserine" evidence="4">
    <location>
        <position position="267"/>
    </location>
</feature>
<feature type="sequence conflict" description="In Ref. 1; AAG17446." evidence="3" ref="1">
    <original>I</original>
    <variation>V</variation>
    <location>
        <position position="690"/>
    </location>
</feature>
<keyword id="KW-0141">cGMP biosynthesis</keyword>
<keyword id="KW-0963">Cytoplasm</keyword>
<keyword id="KW-0342">GTP-binding</keyword>
<keyword id="KW-0456">Lyase</keyword>
<keyword id="KW-0547">Nucleotide-binding</keyword>
<keyword id="KW-0597">Phosphoprotein</keyword>
<keyword id="KW-1185">Reference proteome</keyword>
<dbReference type="EC" id="4.6.1.2" evidence="1"/>
<dbReference type="EMBL" id="AF297082">
    <property type="protein sequence ID" value="AAG17446.1"/>
    <property type="molecule type" value="mRNA"/>
</dbReference>
<dbReference type="EMBL" id="AK004815">
    <property type="protein sequence ID" value="BAB23586.1"/>
    <property type="molecule type" value="mRNA"/>
</dbReference>
<dbReference type="EMBL" id="AK028558">
    <property type="protein sequence ID" value="BAC26009.1"/>
    <property type="molecule type" value="mRNA"/>
</dbReference>
<dbReference type="EMBL" id="BC057327">
    <property type="protein sequence ID" value="AAH57327.1"/>
    <property type="molecule type" value="mRNA"/>
</dbReference>
<dbReference type="EMBL" id="BC094310">
    <property type="protein sequence ID" value="AAH94310.1"/>
    <property type="molecule type" value="mRNA"/>
</dbReference>
<dbReference type="CCDS" id="CCDS17429.1"/>
<dbReference type="RefSeq" id="NP_001343916.1">
    <property type="nucleotide sequence ID" value="NM_001356987.1"/>
</dbReference>
<dbReference type="RefSeq" id="NP_001343917.1">
    <property type="nucleotide sequence ID" value="NM_001356988.1"/>
</dbReference>
<dbReference type="RefSeq" id="NP_068696.2">
    <property type="nucleotide sequence ID" value="NM_021896.5"/>
</dbReference>
<dbReference type="RefSeq" id="XP_006501906.1">
    <property type="nucleotide sequence ID" value="XM_006501843.3"/>
</dbReference>
<dbReference type="RefSeq" id="XP_011238486.1">
    <property type="nucleotide sequence ID" value="XM_011240184.1"/>
</dbReference>
<dbReference type="SMR" id="Q9ERL9"/>
<dbReference type="FunCoup" id="Q9ERL9">
    <property type="interactions" value="480"/>
</dbReference>
<dbReference type="STRING" id="10090.ENSMUSP00000142138"/>
<dbReference type="GlyConnect" id="2364">
    <property type="glycosylation" value="1 N-Linked glycan (1 site)"/>
</dbReference>
<dbReference type="GlyCosmos" id="Q9ERL9">
    <property type="glycosylation" value="1 site, 1 glycan"/>
</dbReference>
<dbReference type="GlyGen" id="Q9ERL9">
    <property type="glycosylation" value="2 sites, 2 N-linked glycans (2 sites)"/>
</dbReference>
<dbReference type="iPTMnet" id="Q9ERL9"/>
<dbReference type="PhosphoSitePlus" id="Q9ERL9"/>
<dbReference type="SwissPalm" id="Q9ERL9"/>
<dbReference type="PaxDb" id="10090-ENSMUSP00000048918"/>
<dbReference type="PeptideAtlas" id="Q9ERL9"/>
<dbReference type="ProteomicsDB" id="267783"/>
<dbReference type="Antibodypedia" id="4394">
    <property type="antibodies" value="304 antibodies from 35 providers"/>
</dbReference>
<dbReference type="DNASU" id="60596"/>
<dbReference type="Ensembl" id="ENSMUST00000048976.8">
    <property type="protein sequence ID" value="ENSMUSP00000048918.7"/>
    <property type="gene ID" value="ENSMUSG00000033910.14"/>
</dbReference>
<dbReference type="Ensembl" id="ENSMUST00000193924.6">
    <property type="protein sequence ID" value="ENSMUSP00000142138.2"/>
    <property type="gene ID" value="ENSMUSG00000033910.14"/>
</dbReference>
<dbReference type="GeneID" id="60596"/>
<dbReference type="KEGG" id="mmu:60596"/>
<dbReference type="UCSC" id="uc008pou.2">
    <property type="organism name" value="mouse"/>
</dbReference>
<dbReference type="AGR" id="MGI:1926562"/>
<dbReference type="CTD" id="2982"/>
<dbReference type="MGI" id="MGI:1926562">
    <property type="gene designation" value="Gucy1a1"/>
</dbReference>
<dbReference type="VEuPathDB" id="HostDB:ENSMUSG00000033910"/>
<dbReference type="eggNOG" id="KOG4171">
    <property type="taxonomic scope" value="Eukaryota"/>
</dbReference>
<dbReference type="GeneTree" id="ENSGT00940000158285"/>
<dbReference type="HOGENOM" id="CLU_011614_5_0_1"/>
<dbReference type="InParanoid" id="Q9ERL9"/>
<dbReference type="OMA" id="NANFFGE"/>
<dbReference type="OrthoDB" id="6127067at2759"/>
<dbReference type="PhylomeDB" id="Q9ERL9"/>
<dbReference type="TreeFam" id="TF351403"/>
<dbReference type="Reactome" id="R-MMU-445355">
    <property type="pathway name" value="Smooth Muscle Contraction"/>
</dbReference>
<dbReference type="BioGRID-ORCS" id="60596">
    <property type="hits" value="7 hits in 76 CRISPR screens"/>
</dbReference>
<dbReference type="PRO" id="PR:Q9ERL9"/>
<dbReference type="Proteomes" id="UP000000589">
    <property type="component" value="Chromosome 3"/>
</dbReference>
<dbReference type="RNAct" id="Q9ERL9">
    <property type="molecule type" value="protein"/>
</dbReference>
<dbReference type="Bgee" id="ENSMUSG00000033910">
    <property type="expression patterns" value="Expressed in olfactory tubercle and 276 other cell types or tissues"/>
</dbReference>
<dbReference type="ExpressionAtlas" id="Q9ERL9">
    <property type="expression patterns" value="baseline and differential"/>
</dbReference>
<dbReference type="GO" id="GO:0098982">
    <property type="term" value="C:GABA-ergic synapse"/>
    <property type="evidence" value="ECO:0000314"/>
    <property type="project" value="SynGO"/>
</dbReference>
<dbReference type="GO" id="GO:0098978">
    <property type="term" value="C:glutamatergic synapse"/>
    <property type="evidence" value="ECO:0000314"/>
    <property type="project" value="SynGO"/>
</dbReference>
<dbReference type="GO" id="GO:0008074">
    <property type="term" value="C:guanylate cyclase complex, soluble"/>
    <property type="evidence" value="ECO:0007669"/>
    <property type="project" value="Ensembl"/>
</dbReference>
<dbReference type="GO" id="GO:0005525">
    <property type="term" value="F:GTP binding"/>
    <property type="evidence" value="ECO:0007669"/>
    <property type="project" value="UniProtKB-KW"/>
</dbReference>
<dbReference type="GO" id="GO:0004383">
    <property type="term" value="F:guanylate cyclase activity"/>
    <property type="evidence" value="ECO:0007669"/>
    <property type="project" value="UniProtKB-EC"/>
</dbReference>
<dbReference type="GO" id="GO:0020037">
    <property type="term" value="F:heme binding"/>
    <property type="evidence" value="ECO:0007669"/>
    <property type="project" value="InterPro"/>
</dbReference>
<dbReference type="GO" id="GO:0006182">
    <property type="term" value="P:cGMP biosynthetic process"/>
    <property type="evidence" value="ECO:0000315"/>
    <property type="project" value="MGI"/>
</dbReference>
<dbReference type="GO" id="GO:0007263">
    <property type="term" value="P:nitric oxide mediated signal transduction"/>
    <property type="evidence" value="ECO:0000315"/>
    <property type="project" value="MGI"/>
</dbReference>
<dbReference type="GO" id="GO:0038060">
    <property type="term" value="P:nitric oxide-cGMP-mediated signaling"/>
    <property type="evidence" value="ECO:0007669"/>
    <property type="project" value="Ensembl"/>
</dbReference>
<dbReference type="GO" id="GO:0010750">
    <property type="term" value="P:positive regulation of nitric oxide mediated signal transduction"/>
    <property type="evidence" value="ECO:0000315"/>
    <property type="project" value="MGI"/>
</dbReference>
<dbReference type="GO" id="GO:0008217">
    <property type="term" value="P:regulation of blood pressure"/>
    <property type="evidence" value="ECO:0000315"/>
    <property type="project" value="MGI"/>
</dbReference>
<dbReference type="GO" id="GO:0060087">
    <property type="term" value="P:relaxation of vascular associated smooth muscle"/>
    <property type="evidence" value="ECO:0000315"/>
    <property type="project" value="MGI"/>
</dbReference>
<dbReference type="GO" id="GO:0098925">
    <property type="term" value="P:retrograde trans-synaptic signaling by nitric oxide, modulating synaptic transmission"/>
    <property type="evidence" value="ECO:0000314"/>
    <property type="project" value="SynGO"/>
</dbReference>
<dbReference type="CDD" id="cd07302">
    <property type="entry name" value="CHD"/>
    <property type="match status" value="1"/>
</dbReference>
<dbReference type="FunFam" id="3.30.450.260:FF:000002">
    <property type="entry name" value="guanylate cyclase soluble subunit alpha-2"/>
    <property type="match status" value="1"/>
</dbReference>
<dbReference type="FunFam" id="3.30.70.1230:FF:000007">
    <property type="entry name" value="Guanylate cyclase soluble subunit alpha-3"/>
    <property type="match status" value="1"/>
</dbReference>
<dbReference type="FunFam" id="3.90.1520.10:FF:000002">
    <property type="entry name" value="Guanylate cyclase soluble subunit alpha-3 isoform A"/>
    <property type="match status" value="1"/>
</dbReference>
<dbReference type="Gene3D" id="6.10.250.780">
    <property type="match status" value="1"/>
</dbReference>
<dbReference type="Gene3D" id="3.90.1520.10">
    <property type="entry name" value="H-NOX domain"/>
    <property type="match status" value="1"/>
</dbReference>
<dbReference type="Gene3D" id="3.30.450.260">
    <property type="entry name" value="Haem NO binding associated domain"/>
    <property type="match status" value="1"/>
</dbReference>
<dbReference type="Gene3D" id="3.30.70.1230">
    <property type="entry name" value="Nucleotide cyclase"/>
    <property type="match status" value="1"/>
</dbReference>
<dbReference type="InterPro" id="IPR001054">
    <property type="entry name" value="A/G_cyclase"/>
</dbReference>
<dbReference type="InterPro" id="IPR018297">
    <property type="entry name" value="A/G_cyclase_CS"/>
</dbReference>
<dbReference type="InterPro" id="IPR038158">
    <property type="entry name" value="H-NOX_domain_sf"/>
</dbReference>
<dbReference type="InterPro" id="IPR011645">
    <property type="entry name" value="HNOB_dom_associated"/>
</dbReference>
<dbReference type="InterPro" id="IPR042463">
    <property type="entry name" value="HNOB_dom_associated_sf"/>
</dbReference>
<dbReference type="InterPro" id="IPR024096">
    <property type="entry name" value="NO_sig/Golgi_transp_ligand-bd"/>
</dbReference>
<dbReference type="InterPro" id="IPR029787">
    <property type="entry name" value="Nucleotide_cyclase"/>
</dbReference>
<dbReference type="PANTHER" id="PTHR45655:SF4">
    <property type="entry name" value="GUANYLATE CYCLASE SOLUBLE SUBUNIT ALPHA-1"/>
    <property type="match status" value="1"/>
</dbReference>
<dbReference type="PANTHER" id="PTHR45655">
    <property type="entry name" value="GUANYLATE CYCLASE SOLUBLE SUBUNIT BETA-2"/>
    <property type="match status" value="1"/>
</dbReference>
<dbReference type="Pfam" id="PF00211">
    <property type="entry name" value="Guanylate_cyc"/>
    <property type="match status" value="1"/>
</dbReference>
<dbReference type="Pfam" id="PF07701">
    <property type="entry name" value="HNOBA"/>
    <property type="match status" value="1"/>
</dbReference>
<dbReference type="SMART" id="SM00044">
    <property type="entry name" value="CYCc"/>
    <property type="match status" value="1"/>
</dbReference>
<dbReference type="SUPFAM" id="SSF111126">
    <property type="entry name" value="Ligand-binding domain in the NO signalling and Golgi transport"/>
    <property type="match status" value="1"/>
</dbReference>
<dbReference type="SUPFAM" id="SSF55073">
    <property type="entry name" value="Nucleotide cyclase"/>
    <property type="match status" value="1"/>
</dbReference>
<dbReference type="PROSITE" id="PS00452">
    <property type="entry name" value="GUANYLATE_CYCLASE_1"/>
    <property type="match status" value="1"/>
</dbReference>
<dbReference type="PROSITE" id="PS50125">
    <property type="entry name" value="GUANYLATE_CYCLASE_2"/>
    <property type="match status" value="1"/>
</dbReference>
<evidence type="ECO:0000250" key="1">
    <source>
        <dbReference type="UniProtKB" id="Q02108"/>
    </source>
</evidence>
<evidence type="ECO:0000255" key="2">
    <source>
        <dbReference type="PROSITE-ProRule" id="PRU00099"/>
    </source>
</evidence>
<evidence type="ECO:0000305" key="3"/>
<evidence type="ECO:0007744" key="4">
    <source>
    </source>
</evidence>
<protein>
    <recommendedName>
        <fullName>Guanylate cyclase soluble subunit alpha-1</fullName>
        <shortName>GCS-alpha-1</shortName>
        <ecNumber evidence="1">4.6.1.2</ecNumber>
    </recommendedName>
    <alternativeName>
        <fullName>Guanylate cyclase soluble subunit alpha-3</fullName>
        <shortName>GCS-alpha-3</shortName>
    </alternativeName>
    <alternativeName>
        <fullName>Soluble guanylate cyclase large subunit</fullName>
    </alternativeName>
</protein>
<gene>
    <name type="primary">Gucy1a1</name>
    <name type="synonym">Gucy1a3</name>
</gene>
<name>GCYA1_MOUSE</name>
<accession>Q9ERL9</accession>
<accession>Q6GTG0</accession>
<accession>Q9DBQ3</accession>
<proteinExistence type="evidence at protein level"/>